<gene>
    <name evidence="1" type="primary">argS</name>
    <name type="ordered locus">BAB1_0896</name>
</gene>
<sequence length="585" mass="65186">MNIFADFDARIKKTFQDIDLKPKDGGELDLSRIGVEPPRDASHGDIATNAAMVLSKAVGQNPRELAARIAEALKADEDVESVDVAGPGFINLRLKASYWQRELLVMLNEGTDFGRSRLGAGKKVNVEYVSANPTGPMHVGHCRGAVVGDVLANLLKFAGYDVVKEYYINDAGAQIDVLARSVMLRYREALGESIGEIPAGLYPGDYLVRVGQELAGEFGTKLLEMPEAEALAIVKDRTIDAMMAMIRADLDALNVHHDVFYSERKLHVDHARAIRNAINDLTLKGHVYKGKLPPPKGRLPEDWEDREQTLFRSTEVGDDIDRPLMKSDGSFTYFAGDVTYFKDKYDRGFNEMIYVLGADHGGYVKRLEAVARAVSDGKAKLTVLLCQLVKLFRNGEPVRMSKRAGEFITLRDVVDEVGRDPVRFMMLYRKNDAPLDFDFAKVTEQSKDNPVFYVQYASARCHSVFRQAADQLGLVDLDRVAMGSHFEKLTDESEIALVRKLAEYPRLIESAAIHQEPHRLAFYLYDLASSFHSQWNRGAENPDLRFIKVNDPDLSLARLGLVQVVSDVLTSGLTIIGADAPTEMR</sequence>
<proteinExistence type="inferred from homology"/>
<feature type="chain" id="PRO_0000241995" description="Arginine--tRNA ligase">
    <location>
        <begin position="1"/>
        <end position="585"/>
    </location>
</feature>
<feature type="short sequence motif" description="'HIGH' region">
    <location>
        <begin position="131"/>
        <end position="141"/>
    </location>
</feature>
<protein>
    <recommendedName>
        <fullName evidence="1">Arginine--tRNA ligase</fullName>
        <ecNumber evidence="1">6.1.1.19</ecNumber>
    </recommendedName>
    <alternativeName>
        <fullName evidence="1">Arginyl-tRNA synthetase</fullName>
        <shortName evidence="1">ArgRS</shortName>
    </alternativeName>
</protein>
<dbReference type="EC" id="6.1.1.19" evidence="1"/>
<dbReference type="EMBL" id="AM040264">
    <property type="protein sequence ID" value="CAJ10852.1"/>
    <property type="molecule type" value="Genomic_DNA"/>
</dbReference>
<dbReference type="RefSeq" id="WP_002964007.1">
    <property type="nucleotide sequence ID" value="NZ_KN046823.1"/>
</dbReference>
<dbReference type="SMR" id="Q2YNJ9"/>
<dbReference type="STRING" id="359391.BAB1_0896"/>
<dbReference type="GeneID" id="93016745"/>
<dbReference type="KEGG" id="bmf:BAB1_0896"/>
<dbReference type="PATRIC" id="fig|359391.11.peg.3204"/>
<dbReference type="HOGENOM" id="CLU_006406_0_1_5"/>
<dbReference type="PhylomeDB" id="Q2YNJ9"/>
<dbReference type="Proteomes" id="UP000002719">
    <property type="component" value="Chromosome I"/>
</dbReference>
<dbReference type="GO" id="GO:0005737">
    <property type="term" value="C:cytoplasm"/>
    <property type="evidence" value="ECO:0007669"/>
    <property type="project" value="UniProtKB-SubCell"/>
</dbReference>
<dbReference type="GO" id="GO:0004814">
    <property type="term" value="F:arginine-tRNA ligase activity"/>
    <property type="evidence" value="ECO:0007669"/>
    <property type="project" value="UniProtKB-UniRule"/>
</dbReference>
<dbReference type="GO" id="GO:0005524">
    <property type="term" value="F:ATP binding"/>
    <property type="evidence" value="ECO:0007669"/>
    <property type="project" value="UniProtKB-UniRule"/>
</dbReference>
<dbReference type="GO" id="GO:0006420">
    <property type="term" value="P:arginyl-tRNA aminoacylation"/>
    <property type="evidence" value="ECO:0007669"/>
    <property type="project" value="UniProtKB-UniRule"/>
</dbReference>
<dbReference type="CDD" id="cd00671">
    <property type="entry name" value="ArgRS_core"/>
    <property type="match status" value="1"/>
</dbReference>
<dbReference type="Gene3D" id="3.30.1360.70">
    <property type="entry name" value="Arginyl tRNA synthetase N-terminal domain"/>
    <property type="match status" value="1"/>
</dbReference>
<dbReference type="Gene3D" id="3.40.50.620">
    <property type="entry name" value="HUPs"/>
    <property type="match status" value="1"/>
</dbReference>
<dbReference type="Gene3D" id="1.10.730.10">
    <property type="entry name" value="Isoleucyl-tRNA Synthetase, Domain 1"/>
    <property type="match status" value="1"/>
</dbReference>
<dbReference type="HAMAP" id="MF_00123">
    <property type="entry name" value="Arg_tRNA_synth"/>
    <property type="match status" value="1"/>
</dbReference>
<dbReference type="InterPro" id="IPR001412">
    <property type="entry name" value="aa-tRNA-synth_I_CS"/>
</dbReference>
<dbReference type="InterPro" id="IPR001278">
    <property type="entry name" value="Arg-tRNA-ligase"/>
</dbReference>
<dbReference type="InterPro" id="IPR005148">
    <property type="entry name" value="Arg-tRNA-synth_N"/>
</dbReference>
<dbReference type="InterPro" id="IPR036695">
    <property type="entry name" value="Arg-tRNA-synth_N_sf"/>
</dbReference>
<dbReference type="InterPro" id="IPR035684">
    <property type="entry name" value="ArgRS_core"/>
</dbReference>
<dbReference type="InterPro" id="IPR008909">
    <property type="entry name" value="DALR_anticod-bd"/>
</dbReference>
<dbReference type="InterPro" id="IPR014729">
    <property type="entry name" value="Rossmann-like_a/b/a_fold"/>
</dbReference>
<dbReference type="InterPro" id="IPR009080">
    <property type="entry name" value="tRNAsynth_Ia_anticodon-bd"/>
</dbReference>
<dbReference type="NCBIfam" id="TIGR00456">
    <property type="entry name" value="argS"/>
    <property type="match status" value="1"/>
</dbReference>
<dbReference type="PANTHER" id="PTHR11956:SF5">
    <property type="entry name" value="ARGININE--TRNA LIGASE, CYTOPLASMIC"/>
    <property type="match status" value="1"/>
</dbReference>
<dbReference type="PANTHER" id="PTHR11956">
    <property type="entry name" value="ARGINYL-TRNA SYNTHETASE"/>
    <property type="match status" value="1"/>
</dbReference>
<dbReference type="Pfam" id="PF03485">
    <property type="entry name" value="Arg_tRNA_synt_N"/>
    <property type="match status" value="1"/>
</dbReference>
<dbReference type="Pfam" id="PF05746">
    <property type="entry name" value="DALR_1"/>
    <property type="match status" value="1"/>
</dbReference>
<dbReference type="Pfam" id="PF00750">
    <property type="entry name" value="tRNA-synt_1d"/>
    <property type="match status" value="1"/>
</dbReference>
<dbReference type="PRINTS" id="PR01038">
    <property type="entry name" value="TRNASYNTHARG"/>
</dbReference>
<dbReference type="SMART" id="SM01016">
    <property type="entry name" value="Arg_tRNA_synt_N"/>
    <property type="match status" value="1"/>
</dbReference>
<dbReference type="SMART" id="SM00836">
    <property type="entry name" value="DALR_1"/>
    <property type="match status" value="1"/>
</dbReference>
<dbReference type="SUPFAM" id="SSF47323">
    <property type="entry name" value="Anticodon-binding domain of a subclass of class I aminoacyl-tRNA synthetases"/>
    <property type="match status" value="1"/>
</dbReference>
<dbReference type="SUPFAM" id="SSF55190">
    <property type="entry name" value="Arginyl-tRNA synthetase (ArgRS), N-terminal 'additional' domain"/>
    <property type="match status" value="1"/>
</dbReference>
<dbReference type="SUPFAM" id="SSF52374">
    <property type="entry name" value="Nucleotidylyl transferase"/>
    <property type="match status" value="1"/>
</dbReference>
<dbReference type="PROSITE" id="PS00178">
    <property type="entry name" value="AA_TRNA_LIGASE_I"/>
    <property type="match status" value="1"/>
</dbReference>
<evidence type="ECO:0000255" key="1">
    <source>
        <dbReference type="HAMAP-Rule" id="MF_00123"/>
    </source>
</evidence>
<reference key="1">
    <citation type="journal article" date="2005" name="Infect. Immun.">
        <title>Whole-genome analyses of speciation events in pathogenic Brucellae.</title>
        <authorList>
            <person name="Chain P.S."/>
            <person name="Comerci D.J."/>
            <person name="Tolmasky M.E."/>
            <person name="Larimer F.W."/>
            <person name="Malfatti S.A."/>
            <person name="Vergez L.M."/>
            <person name="Aguero F."/>
            <person name="Land M.L."/>
            <person name="Ugalde R.A."/>
            <person name="Garcia E."/>
        </authorList>
    </citation>
    <scope>NUCLEOTIDE SEQUENCE [LARGE SCALE GENOMIC DNA]</scope>
    <source>
        <strain>2308</strain>
    </source>
</reference>
<keyword id="KW-0030">Aminoacyl-tRNA synthetase</keyword>
<keyword id="KW-0067">ATP-binding</keyword>
<keyword id="KW-0963">Cytoplasm</keyword>
<keyword id="KW-0436">Ligase</keyword>
<keyword id="KW-0547">Nucleotide-binding</keyword>
<keyword id="KW-0648">Protein biosynthesis</keyword>
<keyword id="KW-1185">Reference proteome</keyword>
<comment type="catalytic activity">
    <reaction evidence="1">
        <text>tRNA(Arg) + L-arginine + ATP = L-arginyl-tRNA(Arg) + AMP + diphosphate</text>
        <dbReference type="Rhea" id="RHEA:20301"/>
        <dbReference type="Rhea" id="RHEA-COMP:9658"/>
        <dbReference type="Rhea" id="RHEA-COMP:9673"/>
        <dbReference type="ChEBI" id="CHEBI:30616"/>
        <dbReference type="ChEBI" id="CHEBI:32682"/>
        <dbReference type="ChEBI" id="CHEBI:33019"/>
        <dbReference type="ChEBI" id="CHEBI:78442"/>
        <dbReference type="ChEBI" id="CHEBI:78513"/>
        <dbReference type="ChEBI" id="CHEBI:456215"/>
        <dbReference type="EC" id="6.1.1.19"/>
    </reaction>
</comment>
<comment type="subunit">
    <text evidence="1">Monomer.</text>
</comment>
<comment type="subcellular location">
    <subcellularLocation>
        <location evidence="1">Cytoplasm</location>
    </subcellularLocation>
</comment>
<comment type="similarity">
    <text evidence="1">Belongs to the class-I aminoacyl-tRNA synthetase family.</text>
</comment>
<organism>
    <name type="scientific">Brucella abortus (strain 2308)</name>
    <dbReference type="NCBI Taxonomy" id="359391"/>
    <lineage>
        <taxon>Bacteria</taxon>
        <taxon>Pseudomonadati</taxon>
        <taxon>Pseudomonadota</taxon>
        <taxon>Alphaproteobacteria</taxon>
        <taxon>Hyphomicrobiales</taxon>
        <taxon>Brucellaceae</taxon>
        <taxon>Brucella/Ochrobactrum group</taxon>
        <taxon>Brucella</taxon>
    </lineage>
</organism>
<accession>Q2YNJ9</accession>
<name>SYR_BRUA2</name>